<dbReference type="EMBL" id="CR859535">
    <property type="protein sequence ID" value="CAH91701.1"/>
    <property type="molecule type" value="mRNA"/>
</dbReference>
<dbReference type="EMBL" id="CR860581">
    <property type="protein sequence ID" value="CAH92706.1"/>
    <property type="molecule type" value="mRNA"/>
</dbReference>
<dbReference type="RefSeq" id="NP_001126584.1">
    <property type="nucleotide sequence ID" value="NM_001133112.1"/>
</dbReference>
<dbReference type="RefSeq" id="XP_024113401.1">
    <property type="nucleotide sequence ID" value="XM_024257633.3"/>
</dbReference>
<dbReference type="RefSeq" id="XP_024113403.1">
    <property type="nucleotide sequence ID" value="XM_024257635.3"/>
</dbReference>
<dbReference type="RefSeq" id="XP_024113404.1">
    <property type="nucleotide sequence ID" value="XM_024257636.3"/>
</dbReference>
<dbReference type="SMR" id="Q5R959"/>
<dbReference type="FunCoup" id="Q5R959">
    <property type="interactions" value="460"/>
</dbReference>
<dbReference type="GeneID" id="100173576"/>
<dbReference type="KEGG" id="pon:100173576"/>
<dbReference type="CTD" id="10253"/>
<dbReference type="InParanoid" id="Q5R959"/>
<dbReference type="OrthoDB" id="10038884at2759"/>
<dbReference type="Proteomes" id="UP000001595">
    <property type="component" value="Unplaced"/>
</dbReference>
<dbReference type="GO" id="GO:0005829">
    <property type="term" value="C:cytosol"/>
    <property type="evidence" value="ECO:0007669"/>
    <property type="project" value="TreeGrafter"/>
</dbReference>
<dbReference type="GO" id="GO:0005874">
    <property type="term" value="C:microtubule"/>
    <property type="evidence" value="ECO:0007669"/>
    <property type="project" value="UniProtKB-KW"/>
</dbReference>
<dbReference type="GO" id="GO:0032587">
    <property type="term" value="C:ruffle membrane"/>
    <property type="evidence" value="ECO:0007669"/>
    <property type="project" value="UniProtKB-SubCell"/>
</dbReference>
<dbReference type="GO" id="GO:0048513">
    <property type="term" value="P:animal organ development"/>
    <property type="evidence" value="ECO:0007669"/>
    <property type="project" value="TreeGrafter"/>
</dbReference>
<dbReference type="GO" id="GO:0010719">
    <property type="term" value="P:negative regulation of epithelial to mesenchymal transition"/>
    <property type="evidence" value="ECO:0000250"/>
    <property type="project" value="UniProtKB"/>
</dbReference>
<dbReference type="GO" id="GO:0070373">
    <property type="term" value="P:negative regulation of ERK1 and ERK2 cascade"/>
    <property type="evidence" value="ECO:0000250"/>
    <property type="project" value="UniProtKB"/>
</dbReference>
<dbReference type="GO" id="GO:0040037">
    <property type="term" value="P:negative regulation of fibroblast growth factor receptor signaling pathway"/>
    <property type="evidence" value="ECO:0007669"/>
    <property type="project" value="TreeGrafter"/>
</dbReference>
<dbReference type="GO" id="GO:1902747">
    <property type="term" value="P:negative regulation of lens fiber cell differentiation"/>
    <property type="evidence" value="ECO:0000250"/>
    <property type="project" value="UniProtKB"/>
</dbReference>
<dbReference type="GO" id="GO:0031397">
    <property type="term" value="P:negative regulation of protein ubiquitination"/>
    <property type="evidence" value="ECO:0000250"/>
    <property type="project" value="UniProtKB"/>
</dbReference>
<dbReference type="GO" id="GO:0046580">
    <property type="term" value="P:negative regulation of Ras protein signal transduction"/>
    <property type="evidence" value="ECO:0007669"/>
    <property type="project" value="TreeGrafter"/>
</dbReference>
<dbReference type="GO" id="GO:0030512">
    <property type="term" value="P:negative regulation of transforming growth factor beta receptor signaling pathway"/>
    <property type="evidence" value="ECO:0000250"/>
    <property type="project" value="UniProtKB"/>
</dbReference>
<dbReference type="InterPro" id="IPR007875">
    <property type="entry name" value="Sprouty"/>
</dbReference>
<dbReference type="InterPro" id="IPR051192">
    <property type="entry name" value="Sprouty_domain"/>
</dbReference>
<dbReference type="PANTHER" id="PTHR12365:SF8">
    <property type="entry name" value="PROTEIN SPROUTY HOMOLOG 2"/>
    <property type="match status" value="1"/>
</dbReference>
<dbReference type="PANTHER" id="PTHR12365">
    <property type="entry name" value="SPROUTY"/>
    <property type="match status" value="1"/>
</dbReference>
<dbReference type="Pfam" id="PF05210">
    <property type="entry name" value="Sprouty"/>
    <property type="match status" value="1"/>
</dbReference>
<dbReference type="PROSITE" id="PS51227">
    <property type="entry name" value="SPR"/>
    <property type="match status" value="1"/>
</dbReference>
<reference key="1">
    <citation type="submission" date="2004-11" db="EMBL/GenBank/DDBJ databases">
        <authorList>
            <consortium name="The German cDNA consortium"/>
        </authorList>
    </citation>
    <scope>NUCLEOTIDE SEQUENCE [LARGE SCALE MRNA]</scope>
    <source>
        <tissue>Brain cortex</tissue>
    </source>
</reference>
<sequence>MEARAQSGNGSQPLLQTPRDGGRPRGEPDPRDALTQQVHVLSLDQIRAIRNTNEYTEGPTVVPRPGLKPAPRPSTQHKHERLHGLPEHRQPPRLQHSQVHSSARAPLSRSISTVSSGSRSSTRTSTSSSSSEQRLLGSSFSSGPVADGIIRVQPKSELKPGELKPLSKEDLGLHAYRCEDCGKCKCKECTYPRPLPSDWICDKQCLCSAQNVIDYGTCVCCVKGLFYHCSNDDEDNCADNPCSCSQSHCCTRWSAMGVMSLFLPCLWCYLPAKGCLKLCQGCYDRVNRPGCRCKNSNTVCCKVPTVPRRNFEKPT</sequence>
<comment type="function">
    <text evidence="2 3">Antagonist of fibroblast growth factor (FGF) pathways via inhibition of FGF-mediated phosphorylation of ERK1/2 (By similarity). Thereby acts as an antagonist of FGF-induced retinal lens fiber differentiation, may inhibit limb bud outgrowth and may negatively modulate respiratory organogenesis (By similarity). Inhibits TGFB-induced epithelial-to-mesenchymal transition in retinal lens epithelial cells (By similarity). Inhibits CBL/C-CBL-mediated EGFR ubiquitination (By similarity).</text>
</comment>
<comment type="subunit">
    <text evidence="2 3">Forms heterodimers with SPRY1 (By similarity). Forms a tripartite complex containing GAB1, METTL13 and SPRY2 (By similarity). Within the complex interacts with METTL13 (By similarity). Interacts with RAF1 (By similarity). Interacts (via C-terminus) with TESK1 (via C-terminus); the interaction disrupts SPRY2 interaction with GRB2, potentially via disruption of SPRY2 serine dephosphorylation (By similarity). Interacts with PPP2R1A/PP2A-A and PPP2CA/PP2A-C; the interaction with PPP2CA/PP2A-C is inhibited by interaction with TESK1, possibly by vesicular sequestration of SPRY2 (By similarity). Inhibition of the interaction with the serine/threonine-protein phosphatase 2A (PP2A) holoenzyme results in loss of PP2A-mediated dephosphorylation, resulting in the loss of SPRY2 interaction with GRB2 (By similarity). Interacts with GRB2 (By similarity). Interacts with CBL/C-CBL; the interaction inhibits CBL-mediated ubiquitination of EGFR (By similarity). Interacts (via C-terminus) with CAV1 (via C-terminus) (By similarity).</text>
</comment>
<comment type="subcellular location">
    <subcellularLocation>
        <location evidence="2">Cytoplasm</location>
        <location evidence="2">Cytoskeleton</location>
    </subcellularLocation>
    <subcellularLocation>
        <location evidence="2">Cell projection</location>
        <location evidence="2">Ruffle membrane</location>
    </subcellularLocation>
    <text evidence="2">Associated with microtubules in unstimulated cells but is translocated to the membrane ruffles in cells stimulated with EGF (epidermal growth factor).</text>
</comment>
<comment type="domain">
    <text evidence="1">The Cys-rich domain is responsible for the localization of the protein to the membrane ruffles.</text>
</comment>
<comment type="PTM">
    <text evidence="2">Cleaved at Pro-144 by the prolyl endopeptidase FAP (seprase) activity (in vitro).</text>
</comment>
<comment type="similarity">
    <text evidence="6">Belongs to the sprouty family.</text>
</comment>
<name>SPY2_PONAB</name>
<evidence type="ECO:0000250" key="1"/>
<evidence type="ECO:0000250" key="2">
    <source>
        <dbReference type="UniProtKB" id="O43597"/>
    </source>
</evidence>
<evidence type="ECO:0000250" key="3">
    <source>
        <dbReference type="UniProtKB" id="Q9QXV8"/>
    </source>
</evidence>
<evidence type="ECO:0000255" key="4">
    <source>
        <dbReference type="PROSITE-ProRule" id="PRU00572"/>
    </source>
</evidence>
<evidence type="ECO:0000256" key="5">
    <source>
        <dbReference type="SAM" id="MobiDB-lite"/>
    </source>
</evidence>
<evidence type="ECO:0000305" key="6"/>
<proteinExistence type="evidence at transcript level"/>
<protein>
    <recommendedName>
        <fullName>Protein sprouty homolog 2</fullName>
        <shortName>Spry-2</shortName>
    </recommendedName>
</protein>
<gene>
    <name type="primary">SPRY2</name>
</gene>
<keyword id="KW-1003">Cell membrane</keyword>
<keyword id="KW-0966">Cell projection</keyword>
<keyword id="KW-0963">Cytoplasm</keyword>
<keyword id="KW-0206">Cytoskeleton</keyword>
<keyword id="KW-0217">Developmental protein</keyword>
<keyword id="KW-0472">Membrane</keyword>
<keyword id="KW-0493">Microtubule</keyword>
<keyword id="KW-1185">Reference proteome</keyword>
<accession>Q5R959</accession>
<accession>Q5R6B0</accession>
<organism>
    <name type="scientific">Pongo abelii</name>
    <name type="common">Sumatran orangutan</name>
    <name type="synonym">Pongo pygmaeus abelii</name>
    <dbReference type="NCBI Taxonomy" id="9601"/>
    <lineage>
        <taxon>Eukaryota</taxon>
        <taxon>Metazoa</taxon>
        <taxon>Chordata</taxon>
        <taxon>Craniata</taxon>
        <taxon>Vertebrata</taxon>
        <taxon>Euteleostomi</taxon>
        <taxon>Mammalia</taxon>
        <taxon>Eutheria</taxon>
        <taxon>Euarchontoglires</taxon>
        <taxon>Primates</taxon>
        <taxon>Haplorrhini</taxon>
        <taxon>Catarrhini</taxon>
        <taxon>Hominidae</taxon>
        <taxon>Pongo</taxon>
    </lineage>
</organism>
<feature type="chain" id="PRO_0000295302" description="Protein sprouty homolog 2">
    <location>
        <begin position="1"/>
        <end position="315"/>
    </location>
</feature>
<feature type="domain" description="SPR" evidence="4">
    <location>
        <begin position="177"/>
        <end position="291"/>
    </location>
</feature>
<feature type="region of interest" description="Disordered" evidence="5">
    <location>
        <begin position="1"/>
        <end position="140"/>
    </location>
</feature>
<feature type="region of interest" description="Required for interaction with CAV1" evidence="3">
    <location>
        <begin position="118"/>
        <end position="315"/>
    </location>
</feature>
<feature type="region of interest" description="Required for interaction with TESK1" evidence="2">
    <location>
        <begin position="178"/>
        <end position="315"/>
    </location>
</feature>
<feature type="compositionally biased region" description="Polar residues" evidence="5">
    <location>
        <begin position="1"/>
        <end position="15"/>
    </location>
</feature>
<feature type="compositionally biased region" description="Basic and acidic residues" evidence="5">
    <location>
        <begin position="20"/>
        <end position="32"/>
    </location>
</feature>
<feature type="compositionally biased region" description="Low complexity" evidence="5">
    <location>
        <begin position="108"/>
        <end position="140"/>
    </location>
</feature>
<feature type="site" description="Cleavage; by FAP" evidence="2">
    <location>
        <begin position="144"/>
        <end position="145"/>
    </location>
</feature>
<feature type="sequence conflict" description="In Ref. 1; CAH92706." evidence="6" ref="1">
    <original>C</original>
    <variation>R</variation>
    <location>
        <position position="237"/>
    </location>
</feature>